<keyword id="KW-0963">Cytoplasm</keyword>
<keyword id="KW-0489">Methyltransferase</keyword>
<keyword id="KW-0698">rRNA processing</keyword>
<keyword id="KW-0949">S-adenosyl-L-methionine</keyword>
<keyword id="KW-0808">Transferase</keyword>
<sequence length="250" mass="26949">MKICLIDETGTGDGALSVLAARWGLEHDEDNLMALVLTPEHLELRKRDEPKLGGIFVDFVGGAMAHRRKFGGGRGEAVAKAVGIKGDYLPDVVDATAGLGRDAFVLASVGCRVRMLERNPVVAALLDDGLARGYADAEIGGWLQERLQLIHASSLTALTDITPRPQVVYLDPMFPHKQKSALVKKEMRVFQSLVGPDLDADGLLEPARLLATKRVVVKRPDYAPPLANVATPNAVVTKGHRFDIYAGTPV</sequence>
<comment type="function">
    <text evidence="1">Specifically methylates the guanosine in position 1516 of 16S rRNA.</text>
</comment>
<comment type="catalytic activity">
    <reaction evidence="1">
        <text>guanosine(1516) in 16S rRNA + S-adenosyl-L-methionine = N(2)-methylguanosine(1516) in 16S rRNA + S-adenosyl-L-homocysteine + H(+)</text>
        <dbReference type="Rhea" id="RHEA:43220"/>
        <dbReference type="Rhea" id="RHEA-COMP:10412"/>
        <dbReference type="Rhea" id="RHEA-COMP:10413"/>
        <dbReference type="ChEBI" id="CHEBI:15378"/>
        <dbReference type="ChEBI" id="CHEBI:57856"/>
        <dbReference type="ChEBI" id="CHEBI:59789"/>
        <dbReference type="ChEBI" id="CHEBI:74269"/>
        <dbReference type="ChEBI" id="CHEBI:74481"/>
        <dbReference type="EC" id="2.1.1.242"/>
    </reaction>
</comment>
<comment type="subcellular location">
    <subcellularLocation>
        <location evidence="1">Cytoplasm</location>
    </subcellularLocation>
</comment>
<comment type="similarity">
    <text evidence="1">Belongs to the methyltransferase superfamily. RsmJ family.</text>
</comment>
<reference key="1">
    <citation type="journal article" date="2009" name="PLoS Genet.">
        <title>Organised genome dynamics in the Escherichia coli species results in highly diverse adaptive paths.</title>
        <authorList>
            <person name="Touchon M."/>
            <person name="Hoede C."/>
            <person name="Tenaillon O."/>
            <person name="Barbe V."/>
            <person name="Baeriswyl S."/>
            <person name="Bidet P."/>
            <person name="Bingen E."/>
            <person name="Bonacorsi S."/>
            <person name="Bouchier C."/>
            <person name="Bouvet O."/>
            <person name="Calteau A."/>
            <person name="Chiapello H."/>
            <person name="Clermont O."/>
            <person name="Cruveiller S."/>
            <person name="Danchin A."/>
            <person name="Diard M."/>
            <person name="Dossat C."/>
            <person name="Karoui M.E."/>
            <person name="Frapy E."/>
            <person name="Garry L."/>
            <person name="Ghigo J.M."/>
            <person name="Gilles A.M."/>
            <person name="Johnson J."/>
            <person name="Le Bouguenec C."/>
            <person name="Lescat M."/>
            <person name="Mangenot S."/>
            <person name="Martinez-Jehanne V."/>
            <person name="Matic I."/>
            <person name="Nassif X."/>
            <person name="Oztas S."/>
            <person name="Petit M.A."/>
            <person name="Pichon C."/>
            <person name="Rouy Z."/>
            <person name="Ruf C.S."/>
            <person name="Schneider D."/>
            <person name="Tourret J."/>
            <person name="Vacherie B."/>
            <person name="Vallenet D."/>
            <person name="Medigue C."/>
            <person name="Rocha E.P.C."/>
            <person name="Denamur E."/>
        </authorList>
    </citation>
    <scope>NUCLEOTIDE SEQUENCE [LARGE SCALE GENOMIC DNA]</scope>
    <source>
        <strain>IAI39 / ExPEC</strain>
    </source>
</reference>
<gene>
    <name evidence="1" type="primary">rsmJ</name>
    <name type="synonym">yhiQ</name>
    <name type="ordered locus">ECIAI39_3987</name>
</gene>
<organism>
    <name type="scientific">Escherichia coli O7:K1 (strain IAI39 / ExPEC)</name>
    <dbReference type="NCBI Taxonomy" id="585057"/>
    <lineage>
        <taxon>Bacteria</taxon>
        <taxon>Pseudomonadati</taxon>
        <taxon>Pseudomonadota</taxon>
        <taxon>Gammaproteobacteria</taxon>
        <taxon>Enterobacterales</taxon>
        <taxon>Enterobacteriaceae</taxon>
        <taxon>Escherichia</taxon>
    </lineage>
</organism>
<protein>
    <recommendedName>
        <fullName evidence="1">Ribosomal RNA small subunit methyltransferase J</fullName>
        <ecNumber evidence="1">2.1.1.242</ecNumber>
    </recommendedName>
    <alternativeName>
        <fullName evidence="1">16S rRNA m2G1516 methyltransferase</fullName>
    </alternativeName>
    <alternativeName>
        <fullName evidence="1">rRNA (guanine-N(2)-)-methyltransferase</fullName>
    </alternativeName>
</protein>
<evidence type="ECO:0000255" key="1">
    <source>
        <dbReference type="HAMAP-Rule" id="MF_01523"/>
    </source>
</evidence>
<feature type="chain" id="PRO_1000198497" description="Ribosomal RNA small subunit methyltransferase J">
    <location>
        <begin position="1"/>
        <end position="250"/>
    </location>
</feature>
<feature type="binding site" evidence="1">
    <location>
        <begin position="101"/>
        <end position="102"/>
    </location>
    <ligand>
        <name>S-adenosyl-L-methionine</name>
        <dbReference type="ChEBI" id="CHEBI:59789"/>
    </ligand>
</feature>
<feature type="binding site" evidence="1">
    <location>
        <begin position="117"/>
        <end position="118"/>
    </location>
    <ligand>
        <name>S-adenosyl-L-methionine</name>
        <dbReference type="ChEBI" id="CHEBI:59789"/>
    </ligand>
</feature>
<feature type="binding site" evidence="1">
    <location>
        <begin position="153"/>
        <end position="154"/>
    </location>
    <ligand>
        <name>S-adenosyl-L-methionine</name>
        <dbReference type="ChEBI" id="CHEBI:59789"/>
    </ligand>
</feature>
<feature type="binding site" evidence="1">
    <location>
        <position position="171"/>
    </location>
    <ligand>
        <name>S-adenosyl-L-methionine</name>
        <dbReference type="ChEBI" id="CHEBI:59789"/>
    </ligand>
</feature>
<dbReference type="EC" id="2.1.1.242" evidence="1"/>
<dbReference type="EMBL" id="CU928164">
    <property type="protein sequence ID" value="CAR20098.1"/>
    <property type="molecule type" value="Genomic_DNA"/>
</dbReference>
<dbReference type="RefSeq" id="WP_000686620.1">
    <property type="nucleotide sequence ID" value="NC_011750.1"/>
</dbReference>
<dbReference type="RefSeq" id="YP_002409879.1">
    <property type="nucleotide sequence ID" value="NC_011750.1"/>
</dbReference>
<dbReference type="SMR" id="B7NNB9"/>
<dbReference type="STRING" id="585057.ECIAI39_3987"/>
<dbReference type="KEGG" id="ect:ECIAI39_3987"/>
<dbReference type="PATRIC" id="fig|585057.6.peg.4126"/>
<dbReference type="HOGENOM" id="CLU_076324_0_0_6"/>
<dbReference type="Proteomes" id="UP000000749">
    <property type="component" value="Chromosome"/>
</dbReference>
<dbReference type="GO" id="GO:0005737">
    <property type="term" value="C:cytoplasm"/>
    <property type="evidence" value="ECO:0007669"/>
    <property type="project" value="UniProtKB-SubCell"/>
</dbReference>
<dbReference type="GO" id="GO:0008990">
    <property type="term" value="F:rRNA (guanine-N2-)-methyltransferase activity"/>
    <property type="evidence" value="ECO:0007669"/>
    <property type="project" value="UniProtKB-UniRule"/>
</dbReference>
<dbReference type="CDD" id="cd02440">
    <property type="entry name" value="AdoMet_MTases"/>
    <property type="match status" value="1"/>
</dbReference>
<dbReference type="FunFam" id="3.40.1630.10:FF:000001">
    <property type="entry name" value="Ribosomal RNA small subunit methyltransferase J"/>
    <property type="match status" value="1"/>
</dbReference>
<dbReference type="FunFam" id="3.40.50.150:FF:000072">
    <property type="entry name" value="Ribosomal RNA small subunit methyltransferase J"/>
    <property type="match status" value="1"/>
</dbReference>
<dbReference type="Gene3D" id="3.40.50.150">
    <property type="entry name" value="Vaccinia Virus protein VP39"/>
    <property type="match status" value="1"/>
</dbReference>
<dbReference type="Gene3D" id="3.40.1630.10">
    <property type="entry name" value="YhiQ-like domain"/>
    <property type="match status" value="1"/>
</dbReference>
<dbReference type="HAMAP" id="MF_01523">
    <property type="entry name" value="16SrRNA_methyltr_J"/>
    <property type="match status" value="1"/>
</dbReference>
<dbReference type="InterPro" id="IPR007536">
    <property type="entry name" value="16SrRNA_methylTrfase_J"/>
</dbReference>
<dbReference type="InterPro" id="IPR029063">
    <property type="entry name" value="SAM-dependent_MTases_sf"/>
</dbReference>
<dbReference type="NCBIfam" id="NF008012">
    <property type="entry name" value="PRK10742.1"/>
    <property type="match status" value="1"/>
</dbReference>
<dbReference type="PANTHER" id="PTHR36112">
    <property type="entry name" value="RIBOSOMAL RNA SMALL SUBUNIT METHYLTRANSFERASE J"/>
    <property type="match status" value="1"/>
</dbReference>
<dbReference type="PANTHER" id="PTHR36112:SF1">
    <property type="entry name" value="RIBOSOMAL RNA SMALL SUBUNIT METHYLTRANSFERASE J"/>
    <property type="match status" value="1"/>
</dbReference>
<dbReference type="Pfam" id="PF04445">
    <property type="entry name" value="SAM_MT"/>
    <property type="match status" value="1"/>
</dbReference>
<dbReference type="SUPFAM" id="SSF53335">
    <property type="entry name" value="S-adenosyl-L-methionine-dependent methyltransferases"/>
    <property type="match status" value="1"/>
</dbReference>
<proteinExistence type="inferred from homology"/>
<accession>B7NNB9</accession>
<name>RSMJ_ECO7I</name>